<organism>
    <name type="scientific">Bothrops jararaca</name>
    <name type="common">Jararaca</name>
    <name type="synonym">Bothrops jajaraca</name>
    <dbReference type="NCBI Taxonomy" id="8724"/>
    <lineage>
        <taxon>Eukaryota</taxon>
        <taxon>Metazoa</taxon>
        <taxon>Chordata</taxon>
        <taxon>Craniata</taxon>
        <taxon>Vertebrata</taxon>
        <taxon>Euteleostomi</taxon>
        <taxon>Lepidosauria</taxon>
        <taxon>Squamata</taxon>
        <taxon>Bifurcata</taxon>
        <taxon>Unidentata</taxon>
        <taxon>Episquamata</taxon>
        <taxon>Toxicofera</taxon>
        <taxon>Serpentes</taxon>
        <taxon>Colubroidea</taxon>
        <taxon>Viperidae</taxon>
        <taxon>Crotalinae</taxon>
        <taxon>Bothrops</taxon>
    </lineage>
</organism>
<proteinExistence type="evidence at protein level"/>
<name>BPPBJ_BOTJA</name>
<reference key="1">
    <citation type="journal article" date="2012" name="Mol. Cell. Proteomics">
        <title>Peptidomics of three Bothrops snake venoms: insights into the molecular diversification of proteomes and peptidomes.</title>
        <authorList>
            <person name="Tashima A.K."/>
            <person name="Zelanis A."/>
            <person name="Kitano E.S."/>
            <person name="Ianzer D."/>
            <person name="Melo R.L."/>
            <person name="Rioli V."/>
            <person name="Sant'anna S.S."/>
            <person name="Schenberg A.C."/>
            <person name="Camargo A.C."/>
            <person name="Serrano S.M.T."/>
        </authorList>
    </citation>
    <scope>PROTEIN SEQUENCE</scope>
    <scope>PYROGLUTAMATE FORMATION AT GLN-1</scope>
    <scope>MASS SPECTROMETRY</scope>
    <source>
        <tissue>Venom</tissue>
    </source>
</reference>
<protein>
    <recommendedName>
        <fullName>Bradykinin-potentiating peptide 11j</fullName>
        <shortName>BPP-11j</shortName>
    </recommendedName>
</protein>
<accession>P0DL05</accession>
<sequence length="11" mass="1223">QNRHPPIPPAP</sequence>
<comment type="function">
    <text evidence="1">This peptide both inhibits the activity of the angiotensin-converting enzyme (ACE) and enhances the action of bradykinin by inhibiting the peptidases that inactivate it. It acts as an indirect hypotensive agent (By similarity).</text>
</comment>
<comment type="subcellular location">
    <subcellularLocation>
        <location>Secreted</location>
    </subcellularLocation>
</comment>
<comment type="tissue specificity">
    <text>Expressed by the venom gland.</text>
</comment>
<comment type="mass spectrometry" mass="1205.6" method="Electrospray" evidence="2"/>
<comment type="similarity">
    <text evidence="3">Belongs to the bradykinin-potentiating peptide family.</text>
</comment>
<evidence type="ECO:0000250" key="1"/>
<evidence type="ECO:0000269" key="2">
    <source>
    </source>
</evidence>
<evidence type="ECO:0000305" key="3"/>
<keyword id="KW-0903">Direct protein sequencing</keyword>
<keyword id="KW-0382">Hypotensive agent</keyword>
<keyword id="KW-0481">Metalloenzyme inhibitor</keyword>
<keyword id="KW-0483">Metalloprotease inhibitor</keyword>
<keyword id="KW-0646">Protease inhibitor</keyword>
<keyword id="KW-0873">Pyrrolidone carboxylic acid</keyword>
<keyword id="KW-0964">Secreted</keyword>
<keyword id="KW-0800">Toxin</keyword>
<feature type="peptide" id="PRO_0000421919" description="Bradykinin-potentiating peptide 11j">
    <location>
        <begin position="1"/>
        <end position="11"/>
    </location>
</feature>
<feature type="modified residue" description="Pyrrolidone carboxylic acid" evidence="2">
    <location>
        <position position="1"/>
    </location>
</feature>
<feature type="unsure residue" description="I or L">
    <location>
        <position position="7"/>
    </location>
</feature>
<dbReference type="GO" id="GO:0005576">
    <property type="term" value="C:extracellular region"/>
    <property type="evidence" value="ECO:0007669"/>
    <property type="project" value="UniProtKB-SubCell"/>
</dbReference>
<dbReference type="GO" id="GO:0030414">
    <property type="term" value="F:peptidase inhibitor activity"/>
    <property type="evidence" value="ECO:0007669"/>
    <property type="project" value="UniProtKB-KW"/>
</dbReference>
<dbReference type="GO" id="GO:0090729">
    <property type="term" value="F:toxin activity"/>
    <property type="evidence" value="ECO:0007669"/>
    <property type="project" value="UniProtKB-KW"/>
</dbReference>
<dbReference type="GO" id="GO:0008217">
    <property type="term" value="P:regulation of blood pressure"/>
    <property type="evidence" value="ECO:0007669"/>
    <property type="project" value="UniProtKB-KW"/>
</dbReference>